<feature type="chain" id="PRO_0000331432" description="Purkinje cell protein 4-like protein 1">
    <location>
        <begin position="1"/>
        <end position="68"/>
    </location>
</feature>
<feature type="domain" description="IQ">
    <location>
        <begin position="45"/>
        <end position="68"/>
    </location>
</feature>
<feature type="region of interest" description="Disordered" evidence="2">
    <location>
        <begin position="1"/>
        <end position="45"/>
    </location>
</feature>
<feature type="compositionally biased region" description="Polar residues" evidence="2">
    <location>
        <begin position="1"/>
        <end position="16"/>
    </location>
</feature>
<feature type="compositionally biased region" description="Basic and acidic residues" evidence="2">
    <location>
        <begin position="18"/>
        <end position="31"/>
    </location>
</feature>
<feature type="modified residue" description="Phosphothreonine" evidence="1">
    <location>
        <position position="8"/>
    </location>
</feature>
<gene>
    <name type="primary">PCP4L1</name>
    <name type="synonym">IQM1</name>
</gene>
<comment type="similarity">
    <text evidence="3">Belongs to the PCP4 family.</text>
</comment>
<keyword id="KW-0597">Phosphoprotein</keyword>
<keyword id="KW-1267">Proteomics identification</keyword>
<keyword id="KW-1185">Reference proteome</keyword>
<proteinExistence type="evidence at protein level"/>
<sequence length="68" mass="7476">MSELNTKTSPATNQAAGQEEKGKAGNVKKAEEEEEIDIDLTAPETEKAALAIQGKFRRFQKRKKDPSS</sequence>
<reference key="1">
    <citation type="journal article" date="2006" name="Nature">
        <title>The DNA sequence and biological annotation of human chromosome 1.</title>
        <authorList>
            <person name="Gregory S.G."/>
            <person name="Barlow K.F."/>
            <person name="McLay K.E."/>
            <person name="Kaul R."/>
            <person name="Swarbreck D."/>
            <person name="Dunham A."/>
            <person name="Scott C.E."/>
            <person name="Howe K.L."/>
            <person name="Woodfine K."/>
            <person name="Spencer C.C.A."/>
            <person name="Jones M.C."/>
            <person name="Gillson C."/>
            <person name="Searle S."/>
            <person name="Zhou Y."/>
            <person name="Kokocinski F."/>
            <person name="McDonald L."/>
            <person name="Evans R."/>
            <person name="Phillips K."/>
            <person name="Atkinson A."/>
            <person name="Cooper R."/>
            <person name="Jones C."/>
            <person name="Hall R.E."/>
            <person name="Andrews T.D."/>
            <person name="Lloyd C."/>
            <person name="Ainscough R."/>
            <person name="Almeida J.P."/>
            <person name="Ambrose K.D."/>
            <person name="Anderson F."/>
            <person name="Andrew R.W."/>
            <person name="Ashwell R.I.S."/>
            <person name="Aubin K."/>
            <person name="Babbage A.K."/>
            <person name="Bagguley C.L."/>
            <person name="Bailey J."/>
            <person name="Beasley H."/>
            <person name="Bethel G."/>
            <person name="Bird C.P."/>
            <person name="Bray-Allen S."/>
            <person name="Brown J.Y."/>
            <person name="Brown A.J."/>
            <person name="Buckley D."/>
            <person name="Burton J."/>
            <person name="Bye J."/>
            <person name="Carder C."/>
            <person name="Chapman J.C."/>
            <person name="Clark S.Y."/>
            <person name="Clarke G."/>
            <person name="Clee C."/>
            <person name="Cobley V."/>
            <person name="Collier R.E."/>
            <person name="Corby N."/>
            <person name="Coville G.J."/>
            <person name="Davies J."/>
            <person name="Deadman R."/>
            <person name="Dunn M."/>
            <person name="Earthrowl M."/>
            <person name="Ellington A.G."/>
            <person name="Errington H."/>
            <person name="Frankish A."/>
            <person name="Frankland J."/>
            <person name="French L."/>
            <person name="Garner P."/>
            <person name="Garnett J."/>
            <person name="Gay L."/>
            <person name="Ghori M.R.J."/>
            <person name="Gibson R."/>
            <person name="Gilby L.M."/>
            <person name="Gillett W."/>
            <person name="Glithero R.J."/>
            <person name="Grafham D.V."/>
            <person name="Griffiths C."/>
            <person name="Griffiths-Jones S."/>
            <person name="Grocock R."/>
            <person name="Hammond S."/>
            <person name="Harrison E.S.I."/>
            <person name="Hart E."/>
            <person name="Haugen E."/>
            <person name="Heath P.D."/>
            <person name="Holmes S."/>
            <person name="Holt K."/>
            <person name="Howden P.J."/>
            <person name="Hunt A.R."/>
            <person name="Hunt S.E."/>
            <person name="Hunter G."/>
            <person name="Isherwood J."/>
            <person name="James R."/>
            <person name="Johnson C."/>
            <person name="Johnson D."/>
            <person name="Joy A."/>
            <person name="Kay M."/>
            <person name="Kershaw J.K."/>
            <person name="Kibukawa M."/>
            <person name="Kimberley A.M."/>
            <person name="King A."/>
            <person name="Knights A.J."/>
            <person name="Lad H."/>
            <person name="Laird G."/>
            <person name="Lawlor S."/>
            <person name="Leongamornlert D.A."/>
            <person name="Lloyd D.M."/>
            <person name="Loveland J."/>
            <person name="Lovell J."/>
            <person name="Lush M.J."/>
            <person name="Lyne R."/>
            <person name="Martin S."/>
            <person name="Mashreghi-Mohammadi M."/>
            <person name="Matthews L."/>
            <person name="Matthews N.S.W."/>
            <person name="McLaren S."/>
            <person name="Milne S."/>
            <person name="Mistry S."/>
            <person name="Moore M.J.F."/>
            <person name="Nickerson T."/>
            <person name="O'Dell C.N."/>
            <person name="Oliver K."/>
            <person name="Palmeiri A."/>
            <person name="Palmer S.A."/>
            <person name="Parker A."/>
            <person name="Patel D."/>
            <person name="Pearce A.V."/>
            <person name="Peck A.I."/>
            <person name="Pelan S."/>
            <person name="Phelps K."/>
            <person name="Phillimore B.J."/>
            <person name="Plumb R."/>
            <person name="Rajan J."/>
            <person name="Raymond C."/>
            <person name="Rouse G."/>
            <person name="Saenphimmachak C."/>
            <person name="Sehra H.K."/>
            <person name="Sheridan E."/>
            <person name="Shownkeen R."/>
            <person name="Sims S."/>
            <person name="Skuce C.D."/>
            <person name="Smith M."/>
            <person name="Steward C."/>
            <person name="Subramanian S."/>
            <person name="Sycamore N."/>
            <person name="Tracey A."/>
            <person name="Tromans A."/>
            <person name="Van Helmond Z."/>
            <person name="Wall M."/>
            <person name="Wallis J.M."/>
            <person name="White S."/>
            <person name="Whitehead S.L."/>
            <person name="Wilkinson J.E."/>
            <person name="Willey D.L."/>
            <person name="Williams H."/>
            <person name="Wilming L."/>
            <person name="Wray P.W."/>
            <person name="Wu Z."/>
            <person name="Coulson A."/>
            <person name="Vaudin M."/>
            <person name="Sulston J.E."/>
            <person name="Durbin R.M."/>
            <person name="Hubbard T."/>
            <person name="Wooster R."/>
            <person name="Dunham I."/>
            <person name="Carter N.P."/>
            <person name="McVean G."/>
            <person name="Ross M.T."/>
            <person name="Harrow J."/>
            <person name="Olson M.V."/>
            <person name="Beck S."/>
            <person name="Rogers J."/>
            <person name="Bentley D.R."/>
        </authorList>
    </citation>
    <scope>NUCLEOTIDE SEQUENCE [LARGE SCALE GENOMIC DNA]</scope>
</reference>
<reference key="2">
    <citation type="journal article" date="2004" name="Genome Res.">
        <title>The status, quality, and expansion of the NIH full-length cDNA project: the Mammalian Gene Collection (MGC).</title>
        <authorList>
            <consortium name="The MGC Project Team"/>
        </authorList>
    </citation>
    <scope>NUCLEOTIDE SEQUENCE [LARGE SCALE MRNA]</scope>
    <source>
        <tissue>Brain</tissue>
        <tissue>Testis</tissue>
        <tissue>Urinary bladder</tissue>
    </source>
</reference>
<organism>
    <name type="scientific">Homo sapiens</name>
    <name type="common">Human</name>
    <dbReference type="NCBI Taxonomy" id="9606"/>
    <lineage>
        <taxon>Eukaryota</taxon>
        <taxon>Metazoa</taxon>
        <taxon>Chordata</taxon>
        <taxon>Craniata</taxon>
        <taxon>Vertebrata</taxon>
        <taxon>Euteleostomi</taxon>
        <taxon>Mammalia</taxon>
        <taxon>Eutheria</taxon>
        <taxon>Euarchontoglires</taxon>
        <taxon>Primates</taxon>
        <taxon>Haplorrhini</taxon>
        <taxon>Catarrhini</taxon>
        <taxon>Hominidae</taxon>
        <taxon>Homo</taxon>
    </lineage>
</organism>
<accession>A6NKN8</accession>
<accession>B2RV24</accession>
<accession>B9EJG4</accession>
<protein>
    <recommendedName>
        <fullName>Purkinje cell protein 4-like protein 1</fullName>
        <shortName>PCP4-like protein 1</shortName>
    </recommendedName>
</protein>
<evidence type="ECO:0000250" key="1">
    <source>
        <dbReference type="UniProtKB" id="Q6W8Q3"/>
    </source>
</evidence>
<evidence type="ECO:0000256" key="2">
    <source>
        <dbReference type="SAM" id="MobiDB-lite"/>
    </source>
</evidence>
<evidence type="ECO:0000305" key="3"/>
<dbReference type="EMBL" id="AL592295">
    <property type="status" value="NOT_ANNOTATED_CDS"/>
    <property type="molecule type" value="Genomic_DNA"/>
</dbReference>
<dbReference type="EMBL" id="BC028905">
    <property type="status" value="NOT_ANNOTATED_CDS"/>
    <property type="molecule type" value="mRNA"/>
</dbReference>
<dbReference type="EMBL" id="BC147003">
    <property type="protein sequence ID" value="AAI47004.1"/>
    <property type="molecule type" value="mRNA"/>
</dbReference>
<dbReference type="EMBL" id="BC147004">
    <property type="protein sequence ID" value="AAI47005.1"/>
    <property type="molecule type" value="mRNA"/>
</dbReference>
<dbReference type="CCDS" id="CCDS53412.1"/>
<dbReference type="RefSeq" id="NP_001096036.1">
    <property type="nucleotide sequence ID" value="NM_001102566.2"/>
</dbReference>
<dbReference type="SMR" id="A6NKN8"/>
<dbReference type="BioGRID" id="576410">
    <property type="interactions" value="13"/>
</dbReference>
<dbReference type="FunCoup" id="A6NKN8">
    <property type="interactions" value="19"/>
</dbReference>
<dbReference type="IntAct" id="A6NKN8">
    <property type="interactions" value="3"/>
</dbReference>
<dbReference type="MINT" id="A6NKN8"/>
<dbReference type="STRING" id="9606.ENSP00000426296"/>
<dbReference type="GlyGen" id="A6NKN8">
    <property type="glycosylation" value="2 sites, 1 O-linked glycan (2 sites)"/>
</dbReference>
<dbReference type="iPTMnet" id="A6NKN8"/>
<dbReference type="PhosphoSitePlus" id="A6NKN8"/>
<dbReference type="BioMuta" id="PCP4L1"/>
<dbReference type="jPOST" id="A6NKN8"/>
<dbReference type="MassIVE" id="A6NKN8"/>
<dbReference type="PaxDb" id="9606-ENSP00000426296"/>
<dbReference type="PeptideAtlas" id="A6NKN8"/>
<dbReference type="ProteomicsDB" id="1423"/>
<dbReference type="Antibodypedia" id="74073">
    <property type="antibodies" value="10 antibodies from 8 providers"/>
</dbReference>
<dbReference type="DNASU" id="654790"/>
<dbReference type="Ensembl" id="ENST00000504449.2">
    <property type="protein sequence ID" value="ENSP00000426296.1"/>
    <property type="gene ID" value="ENSG00000248485.2"/>
</dbReference>
<dbReference type="GeneID" id="654790"/>
<dbReference type="KEGG" id="hsa:654790"/>
<dbReference type="MANE-Select" id="ENST00000504449.2">
    <property type="protein sequence ID" value="ENSP00000426296.1"/>
    <property type="RefSeq nucleotide sequence ID" value="NM_001102566.2"/>
    <property type="RefSeq protein sequence ID" value="NP_001096036.1"/>
</dbReference>
<dbReference type="UCSC" id="uc001gad.3">
    <property type="organism name" value="human"/>
</dbReference>
<dbReference type="AGR" id="HGNC:20448"/>
<dbReference type="CTD" id="654790"/>
<dbReference type="DisGeNET" id="654790"/>
<dbReference type="GeneCards" id="PCP4L1"/>
<dbReference type="HGNC" id="HGNC:20448">
    <property type="gene designation" value="PCP4L1"/>
</dbReference>
<dbReference type="HPA" id="ENSG00000248485">
    <property type="expression patterns" value="Tissue enhanced (brain, pituitary gland)"/>
</dbReference>
<dbReference type="neXtProt" id="NX_A6NKN8"/>
<dbReference type="OpenTargets" id="ENSG00000248485"/>
<dbReference type="PharmGKB" id="PA143485573"/>
<dbReference type="VEuPathDB" id="HostDB:ENSG00000248485"/>
<dbReference type="eggNOG" id="ENOG502SDAE">
    <property type="taxonomic scope" value="Eukaryota"/>
</dbReference>
<dbReference type="GeneTree" id="ENSGT00530000064299"/>
<dbReference type="HOGENOM" id="CLU_202697_0_0_1"/>
<dbReference type="InParanoid" id="A6NKN8"/>
<dbReference type="OMA" id="MSERGHT"/>
<dbReference type="PAN-GO" id="A6NKN8">
    <property type="GO annotations" value="0 GO annotations based on evolutionary models"/>
</dbReference>
<dbReference type="PhylomeDB" id="A6NKN8"/>
<dbReference type="TreeFam" id="TF336068"/>
<dbReference type="PathwayCommons" id="A6NKN8"/>
<dbReference type="SignaLink" id="A6NKN8"/>
<dbReference type="BioGRID-ORCS" id="654790">
    <property type="hits" value="14 hits in 1135 CRISPR screens"/>
</dbReference>
<dbReference type="ChiTaRS" id="PCP4L1">
    <property type="organism name" value="human"/>
</dbReference>
<dbReference type="GenomeRNAi" id="654790"/>
<dbReference type="Pharos" id="A6NKN8">
    <property type="development level" value="Tdark"/>
</dbReference>
<dbReference type="PRO" id="PR:A6NKN8"/>
<dbReference type="Proteomes" id="UP000005640">
    <property type="component" value="Chromosome 1"/>
</dbReference>
<dbReference type="RNAct" id="A6NKN8">
    <property type="molecule type" value="protein"/>
</dbReference>
<dbReference type="Bgee" id="ENSG00000248485">
    <property type="expression patterns" value="Expressed in oocyte and 145 other cell types or tissues"/>
</dbReference>
<dbReference type="InterPro" id="IPR052142">
    <property type="entry name" value="Calmodulin_Regulator_PCP4-like"/>
</dbReference>
<dbReference type="PANTHER" id="PTHR15359">
    <property type="entry name" value="IG-LIKE DOMAIN-CONTAINING PROTEIN"/>
    <property type="match status" value="1"/>
</dbReference>
<dbReference type="PANTHER" id="PTHR15359:SF5">
    <property type="entry name" value="PURKINJE CELL PROTEIN 4-LIKE PROTEIN 1"/>
    <property type="match status" value="1"/>
</dbReference>
<name>PC4L1_HUMAN</name>